<evidence type="ECO:0000250" key="1">
    <source>
        <dbReference type="UniProtKB" id="P32969"/>
    </source>
</evidence>
<evidence type="ECO:0000305" key="2"/>
<dbReference type="EMBL" id="AF401562">
    <property type="protein sequence ID" value="AAK95134.1"/>
    <property type="molecule type" value="mRNA"/>
</dbReference>
<dbReference type="RefSeq" id="NP_001187038.1">
    <property type="nucleotide sequence ID" value="NM_001200109.1"/>
</dbReference>
<dbReference type="RefSeq" id="XP_017316271.1">
    <property type="nucleotide sequence ID" value="XM_017460782.3"/>
</dbReference>
<dbReference type="SMR" id="Q90YW0"/>
<dbReference type="STRING" id="7998.ENSIPUP00000005140"/>
<dbReference type="GeneID" id="100304525"/>
<dbReference type="KEGG" id="ipu:100304525"/>
<dbReference type="CTD" id="6133"/>
<dbReference type="OMA" id="YAHFPMK"/>
<dbReference type="OrthoDB" id="10252633at2759"/>
<dbReference type="Proteomes" id="UP000221080">
    <property type="component" value="Chromosome 29"/>
</dbReference>
<dbReference type="GO" id="GO:0022625">
    <property type="term" value="C:cytosolic large ribosomal subunit"/>
    <property type="evidence" value="ECO:0007669"/>
    <property type="project" value="TreeGrafter"/>
</dbReference>
<dbReference type="GO" id="GO:0019843">
    <property type="term" value="F:rRNA binding"/>
    <property type="evidence" value="ECO:0007669"/>
    <property type="project" value="InterPro"/>
</dbReference>
<dbReference type="GO" id="GO:0003735">
    <property type="term" value="F:structural constituent of ribosome"/>
    <property type="evidence" value="ECO:0007669"/>
    <property type="project" value="InterPro"/>
</dbReference>
<dbReference type="GO" id="GO:0002181">
    <property type="term" value="P:cytoplasmic translation"/>
    <property type="evidence" value="ECO:0007669"/>
    <property type="project" value="TreeGrafter"/>
</dbReference>
<dbReference type="FunFam" id="3.90.930.12:FF:000003">
    <property type="entry name" value="60S ribosomal protein L9"/>
    <property type="match status" value="1"/>
</dbReference>
<dbReference type="FunFam" id="3.90.930.12:FF:000005">
    <property type="entry name" value="60S ribosomal protein L9"/>
    <property type="match status" value="1"/>
</dbReference>
<dbReference type="Gene3D" id="3.90.930.12">
    <property type="entry name" value="Ribosomal protein L6, alpha-beta domain"/>
    <property type="match status" value="2"/>
</dbReference>
<dbReference type="InterPro" id="IPR000702">
    <property type="entry name" value="Ribosomal_uL6-like"/>
</dbReference>
<dbReference type="InterPro" id="IPR036789">
    <property type="entry name" value="Ribosomal_uL6-like_a/b-dom_sf"/>
</dbReference>
<dbReference type="InterPro" id="IPR020040">
    <property type="entry name" value="Ribosomal_uL6_a/b-dom"/>
</dbReference>
<dbReference type="InterPro" id="IPR002359">
    <property type="entry name" value="Ribosomal_uL6_CS2"/>
</dbReference>
<dbReference type="PANTHER" id="PTHR11655:SF16">
    <property type="entry name" value="60S RIBOSOMAL PROTEIN L9"/>
    <property type="match status" value="1"/>
</dbReference>
<dbReference type="PANTHER" id="PTHR11655">
    <property type="entry name" value="60S/50S RIBOSOMAL PROTEIN L6/L9"/>
    <property type="match status" value="1"/>
</dbReference>
<dbReference type="Pfam" id="PF00347">
    <property type="entry name" value="Ribosomal_L6"/>
    <property type="match status" value="2"/>
</dbReference>
<dbReference type="PIRSF" id="PIRSF002162">
    <property type="entry name" value="Ribosomal_L6"/>
    <property type="match status" value="1"/>
</dbReference>
<dbReference type="SUPFAM" id="SSF56053">
    <property type="entry name" value="Ribosomal protein L6"/>
    <property type="match status" value="2"/>
</dbReference>
<dbReference type="PROSITE" id="PS00700">
    <property type="entry name" value="RIBOSOMAL_L6_2"/>
    <property type="match status" value="1"/>
</dbReference>
<reference key="1">
    <citation type="journal article" date="2003" name="Gene">
        <title>Translational machinery of channel catfish: II. Complementary DNA and expression of the complete set of 47 60S ribosomal proteins.</title>
        <authorList>
            <person name="Patterson A.P."/>
            <person name="Karsi A."/>
            <person name="Feng J."/>
            <person name="Liu Z.J."/>
        </authorList>
    </citation>
    <scope>NUCLEOTIDE SEQUENCE [MRNA]</scope>
</reference>
<gene>
    <name type="primary">rpl9</name>
</gene>
<organism>
    <name type="scientific">Ictalurus punctatus</name>
    <name type="common">Channel catfish</name>
    <name type="synonym">Silurus punctatus</name>
    <dbReference type="NCBI Taxonomy" id="7998"/>
    <lineage>
        <taxon>Eukaryota</taxon>
        <taxon>Metazoa</taxon>
        <taxon>Chordata</taxon>
        <taxon>Craniata</taxon>
        <taxon>Vertebrata</taxon>
        <taxon>Euteleostomi</taxon>
        <taxon>Actinopterygii</taxon>
        <taxon>Neopterygii</taxon>
        <taxon>Teleostei</taxon>
        <taxon>Ostariophysi</taxon>
        <taxon>Siluriformes</taxon>
        <taxon>Ictaluridae</taxon>
        <taxon>Ictalurus</taxon>
    </lineage>
</organism>
<keyword id="KW-0963">Cytoplasm</keyword>
<keyword id="KW-0687">Ribonucleoprotein</keyword>
<keyword id="KW-0689">Ribosomal protein</keyword>
<sequence length="192" mass="21790">MKTILSTQTVDIPDNVDVTLKGRTVSVKGPRGVLRREFNHINLELRLLGKKQKKLRVDKWWGNRKELATVRTICSHVQNMIKGVTLGFRYKMRSVYAHFPINVVIQETGSLVEIRNFLGEKYIRRVRMRPGVNCALSAAQKDELVLEGNDIELVSNSAALIQQATTVKNKDIRKFLDGIYVSEKGTVVEPES</sequence>
<proteinExistence type="evidence at transcript level"/>
<name>RL9_ICTPU</name>
<comment type="function">
    <text evidence="1">Component of the large ribosomal subunit. The ribosome is a large ribonucleoprotein complex responsible for the synthesis of proteins in the cell.</text>
</comment>
<comment type="subunit">
    <text evidence="1">Component of the large ribosomal subunit.</text>
</comment>
<comment type="subcellular location">
    <subcellularLocation>
        <location evidence="1">Cytoplasm</location>
    </subcellularLocation>
</comment>
<comment type="similarity">
    <text evidence="2">Belongs to the universal ribosomal protein uL6 family.</text>
</comment>
<accession>Q90YW0</accession>
<protein>
    <recommendedName>
        <fullName evidence="2">Large ribosomal subunit protein uL6</fullName>
    </recommendedName>
    <alternativeName>
        <fullName>60S ribosomal protein L9</fullName>
    </alternativeName>
</protein>
<feature type="chain" id="PRO_0000131101" description="Large ribosomal subunit protein uL6">
    <location>
        <begin position="1"/>
        <end position="192"/>
    </location>
</feature>